<accession>Q2HFE0</accession>
<proteinExistence type="inferred from homology"/>
<reference key="1">
    <citation type="journal article" date="2015" name="Genome Announc.">
        <title>Draft genome sequence of the cellulolytic fungus Chaetomium globosum.</title>
        <authorList>
            <person name="Cuomo C.A."/>
            <person name="Untereiner W.A."/>
            <person name="Ma L.-J."/>
            <person name="Grabherr M."/>
            <person name="Birren B.W."/>
        </authorList>
    </citation>
    <scope>NUCLEOTIDE SEQUENCE [LARGE SCALE GENOMIC DNA]</scope>
    <source>
        <strain>ATCC 6205 / CBS 148.51 / DSM 1962 / NBRC 6347 / NRRL 1970</strain>
    </source>
</reference>
<feature type="chain" id="PRO_0000318024" description="Autophagy-related protein 22">
    <location>
        <begin position="1"/>
        <end position="650"/>
    </location>
</feature>
<feature type="transmembrane region" description="Helical" evidence="2">
    <location>
        <begin position="95"/>
        <end position="115"/>
    </location>
</feature>
<feature type="transmembrane region" description="Helical" evidence="2">
    <location>
        <begin position="160"/>
        <end position="180"/>
    </location>
</feature>
<feature type="transmembrane region" description="Helical" evidence="2">
    <location>
        <begin position="193"/>
        <end position="213"/>
    </location>
</feature>
<feature type="transmembrane region" description="Helical" evidence="2">
    <location>
        <begin position="217"/>
        <end position="237"/>
    </location>
</feature>
<feature type="transmembrane region" description="Helical" evidence="2">
    <location>
        <begin position="320"/>
        <end position="340"/>
    </location>
</feature>
<feature type="transmembrane region" description="Helical" evidence="2">
    <location>
        <begin position="351"/>
        <end position="371"/>
    </location>
</feature>
<feature type="transmembrane region" description="Helical" evidence="2">
    <location>
        <begin position="412"/>
        <end position="432"/>
    </location>
</feature>
<feature type="transmembrane region" description="Helical" evidence="2">
    <location>
        <begin position="449"/>
        <end position="469"/>
    </location>
</feature>
<feature type="transmembrane region" description="Helical" evidence="2">
    <location>
        <begin position="484"/>
        <end position="504"/>
    </location>
</feature>
<feature type="transmembrane region" description="Helical" evidence="2">
    <location>
        <begin position="518"/>
        <end position="538"/>
    </location>
</feature>
<feature type="transmembrane region" description="Helical" evidence="2">
    <location>
        <begin position="557"/>
        <end position="577"/>
    </location>
</feature>
<feature type="transmembrane region" description="Helical" evidence="2">
    <location>
        <begin position="586"/>
        <end position="606"/>
    </location>
</feature>
<feature type="region of interest" description="Disordered" evidence="3">
    <location>
        <begin position="36"/>
        <end position="85"/>
    </location>
</feature>
<feature type="region of interest" description="Disordered" evidence="3">
    <location>
        <begin position="628"/>
        <end position="650"/>
    </location>
</feature>
<feature type="compositionally biased region" description="Low complexity" evidence="3">
    <location>
        <begin position="56"/>
        <end position="72"/>
    </location>
</feature>
<feature type="compositionally biased region" description="Basic and acidic residues" evidence="3">
    <location>
        <begin position="628"/>
        <end position="639"/>
    </location>
</feature>
<feature type="glycosylation site" description="N-linked (GlcNAc...) asparagine" evidence="2">
    <location>
        <position position="311"/>
    </location>
</feature>
<feature type="glycosylation site" description="N-linked (GlcNAc...) asparagine" evidence="2">
    <location>
        <position position="344"/>
    </location>
</feature>
<gene>
    <name type="primary">ATG22</name>
    <name type="ORF">CHGG_01064</name>
</gene>
<evidence type="ECO:0000250" key="1"/>
<evidence type="ECO:0000255" key="2"/>
<evidence type="ECO:0000256" key="3">
    <source>
        <dbReference type="SAM" id="MobiDB-lite"/>
    </source>
</evidence>
<evidence type="ECO:0000305" key="4"/>
<dbReference type="EMBL" id="CH408029">
    <property type="protein sequence ID" value="EAQ92829.1"/>
    <property type="status" value="ALT_SEQ"/>
    <property type="molecule type" value="Genomic_DNA"/>
</dbReference>
<dbReference type="RefSeq" id="XP_001220285.1">
    <property type="nucleotide sequence ID" value="XM_001220284.1"/>
</dbReference>
<dbReference type="FunCoup" id="Q2HFE0">
    <property type="interactions" value="19"/>
</dbReference>
<dbReference type="STRING" id="306901.Q2HFE0"/>
<dbReference type="GlyCosmos" id="Q2HFE0">
    <property type="glycosylation" value="2 sites, No reported glycans"/>
</dbReference>
<dbReference type="GeneID" id="4386459"/>
<dbReference type="VEuPathDB" id="FungiDB:CHGG_01064"/>
<dbReference type="eggNOG" id="ENOG502QR9I">
    <property type="taxonomic scope" value="Eukaryota"/>
</dbReference>
<dbReference type="HOGENOM" id="CLU_017518_1_1_1"/>
<dbReference type="InParanoid" id="Q2HFE0"/>
<dbReference type="OrthoDB" id="192733at2759"/>
<dbReference type="Proteomes" id="UP000001056">
    <property type="component" value="Unassembled WGS sequence"/>
</dbReference>
<dbReference type="GO" id="GO:0005774">
    <property type="term" value="C:vacuolar membrane"/>
    <property type="evidence" value="ECO:0007669"/>
    <property type="project" value="UniProtKB-SubCell"/>
</dbReference>
<dbReference type="GO" id="GO:0032974">
    <property type="term" value="P:amino acid transmembrane export from vacuole"/>
    <property type="evidence" value="ECO:0007669"/>
    <property type="project" value="InterPro"/>
</dbReference>
<dbReference type="GO" id="GO:0006914">
    <property type="term" value="P:autophagy"/>
    <property type="evidence" value="ECO:0007669"/>
    <property type="project" value="UniProtKB-KW"/>
</dbReference>
<dbReference type="CDD" id="cd17483">
    <property type="entry name" value="MFS_Atg22_like"/>
    <property type="match status" value="1"/>
</dbReference>
<dbReference type="Gene3D" id="1.20.1250.20">
    <property type="entry name" value="MFS general substrate transporter like domains"/>
    <property type="match status" value="1"/>
</dbReference>
<dbReference type="InterPro" id="IPR044738">
    <property type="entry name" value="Atg22"/>
</dbReference>
<dbReference type="InterPro" id="IPR024671">
    <property type="entry name" value="Atg22-like"/>
</dbReference>
<dbReference type="InterPro" id="IPR050495">
    <property type="entry name" value="ATG22/LtaA_families"/>
</dbReference>
<dbReference type="InterPro" id="IPR036259">
    <property type="entry name" value="MFS_trans_sf"/>
</dbReference>
<dbReference type="PANTHER" id="PTHR23519">
    <property type="entry name" value="AUTOPHAGY-RELATED PROTEIN 22"/>
    <property type="match status" value="1"/>
</dbReference>
<dbReference type="PANTHER" id="PTHR23519:SF1">
    <property type="entry name" value="AUTOPHAGY-RELATED PROTEIN 22"/>
    <property type="match status" value="1"/>
</dbReference>
<dbReference type="Pfam" id="PF11700">
    <property type="entry name" value="ATG22"/>
    <property type="match status" value="1"/>
</dbReference>
<dbReference type="SUPFAM" id="SSF103473">
    <property type="entry name" value="MFS general substrate transporter"/>
    <property type="match status" value="1"/>
</dbReference>
<organism>
    <name type="scientific">Chaetomium globosum (strain ATCC 6205 / CBS 148.51 / DSM 1962 / NBRC 6347 / NRRL 1970)</name>
    <name type="common">Soil fungus</name>
    <dbReference type="NCBI Taxonomy" id="306901"/>
    <lineage>
        <taxon>Eukaryota</taxon>
        <taxon>Fungi</taxon>
        <taxon>Dikarya</taxon>
        <taxon>Ascomycota</taxon>
        <taxon>Pezizomycotina</taxon>
        <taxon>Sordariomycetes</taxon>
        <taxon>Sordariomycetidae</taxon>
        <taxon>Sordariales</taxon>
        <taxon>Chaetomiaceae</taxon>
        <taxon>Chaetomium</taxon>
    </lineage>
</organism>
<protein>
    <recommendedName>
        <fullName>Autophagy-related protein 22</fullName>
    </recommendedName>
</protein>
<comment type="function">
    <text evidence="1">Vacuolar effluxer which mediate the efflux of amino acids resulting from autophagic degradation. The release of autophagic amino acids allows the maintenance of protein synthesis and viability during nitrogen starvation (By similarity).</text>
</comment>
<comment type="subcellular location">
    <subcellularLocation>
        <location evidence="1">Vacuole membrane</location>
        <topology evidence="1">Multi-pass membrane protein</topology>
    </subcellularLocation>
    <text evidence="1">Vacuole and punctate structures.</text>
</comment>
<comment type="similarity">
    <text evidence="4">Belongs to the ATG22 family.</text>
</comment>
<comment type="sequence caution" evidence="4">
    <conflict type="erroneous gene model prediction">
        <sequence resource="EMBL-CDS" id="EAQ92829"/>
    </conflict>
</comment>
<name>ATG22_CHAGB</name>
<keyword id="KW-0029">Amino-acid transport</keyword>
<keyword id="KW-0072">Autophagy</keyword>
<keyword id="KW-0325">Glycoprotein</keyword>
<keyword id="KW-0472">Membrane</keyword>
<keyword id="KW-1185">Reference proteome</keyword>
<keyword id="KW-0812">Transmembrane</keyword>
<keyword id="KW-1133">Transmembrane helix</keyword>
<keyword id="KW-0813">Transport</keyword>
<keyword id="KW-0926">Vacuole</keyword>
<sequence length="650" mass="71001">MVPRNDPEAGRPPLAPRLFSRFSQLSKHSFLSYSSSFEADDERSSTGSLENFGIMSPGRSRSNSGSGSSSFGALPPRYPGDDTRPTSPKELAGWYAYAFAAEVYVICGSFIPILLESLARENGVLLSDRKTPCGSSSDKNGDNGGQCIVYVLGMEINTASFAMYTFSISVLIQALLVVSISCAADHGNYRKKLLLAFGWIGSIAVMLYIFVSKNLYIFGALLAIVSNTSFGASFVLLNSFLPLLVRHHPEIIDKEANIVPNGQDAQDHEDLDGETAMADSTAALLPRGSLEDGNALSRVQTREELTSHELNLSTQVSAKGIGIGYIAGLFLQCVAIFILIQMKNTTWSQRVVLFVIGAWWAIFTVPAAMWLRPRPGPPLPASSRHTGIRAFIAYTFYAWKSLFRTVQLARRLVDIMLFLGGWFLLSDAIATTSSTAILFAKTQLHMEPWALGMINVISTAAGITGAFSWSYISRRLHLQAHQTILACIALFEIIPLYGLLGYLPFVKNWGVFGLQQPWEMYPLAAVYGFVLGGLSGYCRSLYGELIPPGSEAAFYALYAITDKGSSVFGPAIVGAIIDASGEIRPAFWFLAAIVGLPAPLIWCINVERGRSEGEKLAEVIEGFKVTRSPERESDEESRAILDVYDEETDR</sequence>